<name>PANC_LEPBL</name>
<gene>
    <name evidence="1" type="primary">panC</name>
    <name type="ordered locus">LBL_1886</name>
</gene>
<protein>
    <recommendedName>
        <fullName evidence="1">Pantothenate synthetase</fullName>
        <shortName evidence="1">PS</shortName>
        <ecNumber evidence="1">6.3.2.1</ecNumber>
    </recommendedName>
    <alternativeName>
        <fullName evidence="1">Pantoate--beta-alanine ligase</fullName>
    </alternativeName>
    <alternativeName>
        <fullName evidence="1">Pantoate-activating enzyme</fullName>
    </alternativeName>
</protein>
<organism>
    <name type="scientific">Leptospira borgpetersenii serovar Hardjo-bovis (strain L550)</name>
    <dbReference type="NCBI Taxonomy" id="355276"/>
    <lineage>
        <taxon>Bacteria</taxon>
        <taxon>Pseudomonadati</taxon>
        <taxon>Spirochaetota</taxon>
        <taxon>Spirochaetia</taxon>
        <taxon>Leptospirales</taxon>
        <taxon>Leptospiraceae</taxon>
        <taxon>Leptospira</taxon>
    </lineage>
</organism>
<dbReference type="EC" id="6.3.2.1" evidence="1"/>
<dbReference type="EMBL" id="CP000348">
    <property type="protein sequence ID" value="ABJ79321.1"/>
    <property type="molecule type" value="Genomic_DNA"/>
</dbReference>
<dbReference type="RefSeq" id="WP_002755097.1">
    <property type="nucleotide sequence ID" value="NC_008508.1"/>
</dbReference>
<dbReference type="SMR" id="Q050C4"/>
<dbReference type="KEGG" id="lbl:LBL_1886"/>
<dbReference type="HOGENOM" id="CLU_047148_0_0_12"/>
<dbReference type="UniPathway" id="UPA00028">
    <property type="reaction ID" value="UER00005"/>
</dbReference>
<dbReference type="GO" id="GO:0005829">
    <property type="term" value="C:cytosol"/>
    <property type="evidence" value="ECO:0007669"/>
    <property type="project" value="TreeGrafter"/>
</dbReference>
<dbReference type="GO" id="GO:0005524">
    <property type="term" value="F:ATP binding"/>
    <property type="evidence" value="ECO:0007669"/>
    <property type="project" value="UniProtKB-KW"/>
</dbReference>
<dbReference type="GO" id="GO:0004592">
    <property type="term" value="F:pantoate-beta-alanine ligase activity"/>
    <property type="evidence" value="ECO:0007669"/>
    <property type="project" value="UniProtKB-UniRule"/>
</dbReference>
<dbReference type="GO" id="GO:0015940">
    <property type="term" value="P:pantothenate biosynthetic process"/>
    <property type="evidence" value="ECO:0007669"/>
    <property type="project" value="UniProtKB-UniRule"/>
</dbReference>
<dbReference type="CDD" id="cd00560">
    <property type="entry name" value="PanC"/>
    <property type="match status" value="1"/>
</dbReference>
<dbReference type="FunFam" id="3.40.50.620:FF:000114">
    <property type="entry name" value="Pantothenate synthetase"/>
    <property type="match status" value="1"/>
</dbReference>
<dbReference type="Gene3D" id="3.40.50.620">
    <property type="entry name" value="HUPs"/>
    <property type="match status" value="1"/>
</dbReference>
<dbReference type="Gene3D" id="3.30.1300.10">
    <property type="entry name" value="Pantoate-beta-alanine ligase, C-terminal domain"/>
    <property type="match status" value="1"/>
</dbReference>
<dbReference type="HAMAP" id="MF_00158">
    <property type="entry name" value="PanC"/>
    <property type="match status" value="1"/>
</dbReference>
<dbReference type="InterPro" id="IPR004821">
    <property type="entry name" value="Cyt_trans-like"/>
</dbReference>
<dbReference type="InterPro" id="IPR003721">
    <property type="entry name" value="Pantoate_ligase"/>
</dbReference>
<dbReference type="InterPro" id="IPR042176">
    <property type="entry name" value="Pantoate_ligase_C"/>
</dbReference>
<dbReference type="InterPro" id="IPR014729">
    <property type="entry name" value="Rossmann-like_a/b/a_fold"/>
</dbReference>
<dbReference type="NCBIfam" id="TIGR00125">
    <property type="entry name" value="cyt_tran_rel"/>
    <property type="match status" value="1"/>
</dbReference>
<dbReference type="NCBIfam" id="TIGR00018">
    <property type="entry name" value="panC"/>
    <property type="match status" value="1"/>
</dbReference>
<dbReference type="PANTHER" id="PTHR21299">
    <property type="entry name" value="CYTIDYLATE KINASE/PANTOATE-BETA-ALANINE LIGASE"/>
    <property type="match status" value="1"/>
</dbReference>
<dbReference type="PANTHER" id="PTHR21299:SF1">
    <property type="entry name" value="PANTOATE--BETA-ALANINE LIGASE"/>
    <property type="match status" value="1"/>
</dbReference>
<dbReference type="Pfam" id="PF02569">
    <property type="entry name" value="Pantoate_ligase"/>
    <property type="match status" value="1"/>
</dbReference>
<dbReference type="SUPFAM" id="SSF52374">
    <property type="entry name" value="Nucleotidylyl transferase"/>
    <property type="match status" value="1"/>
</dbReference>
<feature type="chain" id="PRO_0000305473" description="Pantothenate synthetase">
    <location>
        <begin position="1"/>
        <end position="285"/>
    </location>
</feature>
<feature type="active site" description="Proton donor" evidence="1">
    <location>
        <position position="37"/>
    </location>
</feature>
<feature type="binding site" evidence="1">
    <location>
        <begin position="30"/>
        <end position="37"/>
    </location>
    <ligand>
        <name>ATP</name>
        <dbReference type="ChEBI" id="CHEBI:30616"/>
    </ligand>
</feature>
<feature type="binding site" evidence="1">
    <location>
        <position position="61"/>
    </location>
    <ligand>
        <name>(R)-pantoate</name>
        <dbReference type="ChEBI" id="CHEBI:15980"/>
    </ligand>
</feature>
<feature type="binding site" evidence="1">
    <location>
        <position position="61"/>
    </location>
    <ligand>
        <name>beta-alanine</name>
        <dbReference type="ChEBI" id="CHEBI:57966"/>
    </ligand>
</feature>
<feature type="binding site" evidence="1">
    <location>
        <begin position="148"/>
        <end position="151"/>
    </location>
    <ligand>
        <name>ATP</name>
        <dbReference type="ChEBI" id="CHEBI:30616"/>
    </ligand>
</feature>
<feature type="binding site" evidence="1">
    <location>
        <position position="154"/>
    </location>
    <ligand>
        <name>(R)-pantoate</name>
        <dbReference type="ChEBI" id="CHEBI:15980"/>
    </ligand>
</feature>
<feature type="binding site" evidence="1">
    <location>
        <position position="177"/>
    </location>
    <ligand>
        <name>ATP</name>
        <dbReference type="ChEBI" id="CHEBI:30616"/>
    </ligand>
</feature>
<feature type="binding site" evidence="1">
    <location>
        <begin position="185"/>
        <end position="188"/>
    </location>
    <ligand>
        <name>ATP</name>
        <dbReference type="ChEBI" id="CHEBI:30616"/>
    </ligand>
</feature>
<reference key="1">
    <citation type="journal article" date="2006" name="Proc. Natl. Acad. Sci. U.S.A.">
        <title>Genome reduction in Leptospira borgpetersenii reflects limited transmission potential.</title>
        <authorList>
            <person name="Bulach D.M."/>
            <person name="Zuerner R.L."/>
            <person name="Wilson P."/>
            <person name="Seemann T."/>
            <person name="McGrath A."/>
            <person name="Cullen P.A."/>
            <person name="Davis J."/>
            <person name="Johnson M."/>
            <person name="Kuczek E."/>
            <person name="Alt D.P."/>
            <person name="Peterson-Burch B."/>
            <person name="Coppel R.L."/>
            <person name="Rood J.I."/>
            <person name="Davies J.K."/>
            <person name="Adler B."/>
        </authorList>
    </citation>
    <scope>NUCLEOTIDE SEQUENCE [LARGE SCALE GENOMIC DNA]</scope>
    <source>
        <strain>L550</strain>
    </source>
</reference>
<comment type="function">
    <text evidence="1">Catalyzes the condensation of pantoate with beta-alanine in an ATP-dependent reaction via a pantoyl-adenylate intermediate.</text>
</comment>
<comment type="catalytic activity">
    <reaction evidence="1">
        <text>(R)-pantoate + beta-alanine + ATP = (R)-pantothenate + AMP + diphosphate + H(+)</text>
        <dbReference type="Rhea" id="RHEA:10912"/>
        <dbReference type="ChEBI" id="CHEBI:15378"/>
        <dbReference type="ChEBI" id="CHEBI:15980"/>
        <dbReference type="ChEBI" id="CHEBI:29032"/>
        <dbReference type="ChEBI" id="CHEBI:30616"/>
        <dbReference type="ChEBI" id="CHEBI:33019"/>
        <dbReference type="ChEBI" id="CHEBI:57966"/>
        <dbReference type="ChEBI" id="CHEBI:456215"/>
        <dbReference type="EC" id="6.3.2.1"/>
    </reaction>
</comment>
<comment type="pathway">
    <text evidence="1">Cofactor biosynthesis; (R)-pantothenate biosynthesis; (R)-pantothenate from (R)-pantoate and beta-alanine: step 1/1.</text>
</comment>
<comment type="subunit">
    <text evidence="1">Homodimer.</text>
</comment>
<comment type="subcellular location">
    <subcellularLocation>
        <location evidence="1">Cytoplasm</location>
    </subcellularLocation>
</comment>
<comment type="miscellaneous">
    <text evidence="1">The reaction proceeds by a bi uni uni bi ping pong mechanism.</text>
</comment>
<comment type="similarity">
    <text evidence="1">Belongs to the pantothenate synthetase family.</text>
</comment>
<sequence length="285" mass="32038">MIICRTPEEISVQVRRWKAEDKKVGFVPTMGYLHEGHASLFRECLSKADKTVVSIFVNPAQFNDPEDYAKYPINTDGDLKICESGKVDLVFLPEKETIYPEGIPNVVLQVPHLMRNLCAVSRPGHFEGVLLVISRLFHFVKPDFAFFGKKDYQQYLLVKEFCKILAFPVEVIGCETIRSDKGLALSSRNSRLSEDEKEESLLISRALKLGEAQILSGIKDPVVVRDIMKDVLDSSPKIRLDYLEVLNADTLESLEILEGNILLAAAVFIGSVRLIDNRTLRVASV</sequence>
<proteinExistence type="inferred from homology"/>
<accession>Q050C4</accession>
<evidence type="ECO:0000255" key="1">
    <source>
        <dbReference type="HAMAP-Rule" id="MF_00158"/>
    </source>
</evidence>
<keyword id="KW-0067">ATP-binding</keyword>
<keyword id="KW-0963">Cytoplasm</keyword>
<keyword id="KW-0436">Ligase</keyword>
<keyword id="KW-0547">Nucleotide-binding</keyword>
<keyword id="KW-0566">Pantothenate biosynthesis</keyword>